<evidence type="ECO:0000255" key="1">
    <source>
        <dbReference type="HAMAP-Rule" id="MF_00319"/>
    </source>
</evidence>
<reference key="1">
    <citation type="journal article" date="2008" name="DNA Res.">
        <title>Complete genome sequence and comparative analysis of the wild-type commensal Escherichia coli strain SE11 isolated from a healthy adult.</title>
        <authorList>
            <person name="Oshima K."/>
            <person name="Toh H."/>
            <person name="Ogura Y."/>
            <person name="Sasamoto H."/>
            <person name="Morita H."/>
            <person name="Park S.-H."/>
            <person name="Ooka T."/>
            <person name="Iyoda S."/>
            <person name="Taylor T.D."/>
            <person name="Hayashi T."/>
            <person name="Itoh K."/>
            <person name="Hattori M."/>
        </authorList>
    </citation>
    <scope>NUCLEOTIDE SEQUENCE [LARGE SCALE GENOMIC DNA]</scope>
    <source>
        <strain>SE11</strain>
    </source>
</reference>
<dbReference type="EC" id="3.6.1.26" evidence="1"/>
<dbReference type="EMBL" id="AP009240">
    <property type="protein sequence ID" value="BAG79731.1"/>
    <property type="molecule type" value="Genomic_DNA"/>
</dbReference>
<dbReference type="RefSeq" id="WP_000708997.1">
    <property type="nucleotide sequence ID" value="NC_011415.1"/>
</dbReference>
<dbReference type="SMR" id="B6I4R1"/>
<dbReference type="KEGG" id="ecy:ECSE_4207"/>
<dbReference type="HOGENOM" id="CLU_077117_0_1_6"/>
<dbReference type="UniPathway" id="UPA00609">
    <property type="reaction ID" value="UER00664"/>
</dbReference>
<dbReference type="Proteomes" id="UP000008199">
    <property type="component" value="Chromosome"/>
</dbReference>
<dbReference type="GO" id="GO:0005886">
    <property type="term" value="C:plasma membrane"/>
    <property type="evidence" value="ECO:0007669"/>
    <property type="project" value="UniProtKB-SubCell"/>
</dbReference>
<dbReference type="GO" id="GO:0008715">
    <property type="term" value="F:CDP-diacylglycerol diphosphatase activity"/>
    <property type="evidence" value="ECO:0007669"/>
    <property type="project" value="UniProtKB-UniRule"/>
</dbReference>
<dbReference type="GO" id="GO:0046342">
    <property type="term" value="P:CDP-diacylglycerol catabolic process"/>
    <property type="evidence" value="ECO:0007669"/>
    <property type="project" value="UniProtKB-UniRule"/>
</dbReference>
<dbReference type="GO" id="GO:0008654">
    <property type="term" value="P:phospholipid biosynthetic process"/>
    <property type="evidence" value="ECO:0007669"/>
    <property type="project" value="UniProtKB-KW"/>
</dbReference>
<dbReference type="FunFam" id="3.30.428.30:FF:000001">
    <property type="entry name" value="CDP-diacylglycerol pyrophosphatase"/>
    <property type="match status" value="1"/>
</dbReference>
<dbReference type="Gene3D" id="3.30.428.30">
    <property type="entry name" value="HIT family - CDH-like"/>
    <property type="match status" value="1"/>
</dbReference>
<dbReference type="HAMAP" id="MF_00319">
    <property type="entry name" value="Cdh"/>
    <property type="match status" value="1"/>
</dbReference>
<dbReference type="InterPro" id="IPR003763">
    <property type="entry name" value="CDP-diacylglyc_Pase"/>
</dbReference>
<dbReference type="InterPro" id="IPR015993">
    <property type="entry name" value="CDP-diacylglyc_Pase_proteobac"/>
</dbReference>
<dbReference type="InterPro" id="IPR036265">
    <property type="entry name" value="HIT-like_sf"/>
</dbReference>
<dbReference type="NCBIfam" id="TIGR00672">
    <property type="entry name" value="cdh"/>
    <property type="match status" value="1"/>
</dbReference>
<dbReference type="NCBIfam" id="NF003986">
    <property type="entry name" value="PRK05471.1-5"/>
    <property type="match status" value="1"/>
</dbReference>
<dbReference type="NCBIfam" id="NF003987">
    <property type="entry name" value="PRK05471.1-6"/>
    <property type="match status" value="1"/>
</dbReference>
<dbReference type="Pfam" id="PF02611">
    <property type="entry name" value="CDH"/>
    <property type="match status" value="1"/>
</dbReference>
<dbReference type="PIRSF" id="PIRSF001273">
    <property type="entry name" value="CDH"/>
    <property type="match status" value="1"/>
</dbReference>
<dbReference type="SUPFAM" id="SSF54197">
    <property type="entry name" value="HIT-like"/>
    <property type="match status" value="1"/>
</dbReference>
<accession>B6I4R1</accession>
<proteinExistence type="inferred from homology"/>
<feature type="chain" id="PRO_1000115942" description="CDP-diacylglycerol pyrophosphatase">
    <location>
        <begin position="1"/>
        <end position="251"/>
    </location>
</feature>
<feature type="transmembrane region" description="Helical" evidence="1">
    <location>
        <begin position="4"/>
        <end position="24"/>
    </location>
</feature>
<organism>
    <name type="scientific">Escherichia coli (strain SE11)</name>
    <dbReference type="NCBI Taxonomy" id="409438"/>
    <lineage>
        <taxon>Bacteria</taxon>
        <taxon>Pseudomonadati</taxon>
        <taxon>Pseudomonadota</taxon>
        <taxon>Gammaproteobacteria</taxon>
        <taxon>Enterobacterales</taxon>
        <taxon>Enterobacteriaceae</taxon>
        <taxon>Escherichia</taxon>
    </lineage>
</organism>
<protein>
    <recommendedName>
        <fullName evidence="1">CDP-diacylglycerol pyrophosphatase</fullName>
        <ecNumber evidence="1">3.6.1.26</ecNumber>
    </recommendedName>
    <alternativeName>
        <fullName evidence="1">CDP-diacylglycerol phosphatidylhydrolase</fullName>
    </alternativeName>
    <alternativeName>
        <fullName evidence="1">CDP-diglyceride hydrolase</fullName>
    </alternativeName>
</protein>
<comment type="catalytic activity">
    <reaction evidence="1">
        <text>a CDP-1,2-diacyl-sn-glycerol + H2O = a 1,2-diacyl-sn-glycero-3-phosphate + CMP + 2 H(+)</text>
        <dbReference type="Rhea" id="RHEA:15221"/>
        <dbReference type="ChEBI" id="CHEBI:15377"/>
        <dbReference type="ChEBI" id="CHEBI:15378"/>
        <dbReference type="ChEBI" id="CHEBI:58332"/>
        <dbReference type="ChEBI" id="CHEBI:58608"/>
        <dbReference type="ChEBI" id="CHEBI:60377"/>
        <dbReference type="EC" id="3.6.1.26"/>
    </reaction>
</comment>
<comment type="pathway">
    <text evidence="1">Phospholipid metabolism; CDP-diacylglycerol degradation; phosphatidate from CDP-diacylglycerol: step 1/1.</text>
</comment>
<comment type="subcellular location">
    <subcellularLocation>
        <location evidence="1">Cell inner membrane</location>
        <topology evidence="1">Single-pass membrane protein</topology>
    </subcellularLocation>
</comment>
<comment type="similarity">
    <text evidence="1">Belongs to the Cdh family.</text>
</comment>
<keyword id="KW-0997">Cell inner membrane</keyword>
<keyword id="KW-1003">Cell membrane</keyword>
<keyword id="KW-0378">Hydrolase</keyword>
<keyword id="KW-0444">Lipid biosynthesis</keyword>
<keyword id="KW-0443">Lipid metabolism</keyword>
<keyword id="KW-0472">Membrane</keyword>
<keyword id="KW-0594">Phospholipid biosynthesis</keyword>
<keyword id="KW-1208">Phospholipid metabolism</keyword>
<keyword id="KW-0812">Transmembrane</keyword>
<keyword id="KW-1133">Transmembrane helix</keyword>
<name>CDH_ECOSE</name>
<sequence length="251" mass="28384">MKKAGLLFLVMIVIAVVAAGIGYWKLTGEESDTLRKIVLEECLPNQQQNQNPSPCAEVKPNAGYVVLKDLNGPLQYLLMPTYRINGTESPLLTDPSTPNFFWLAWQARDFMSKKYGQPVPDRAVSLAINSRTGRTQNHFHIHISCIRPDVREQLDNNLANISSRWLPLPGGLRGHEYLARRVTESELVQRSPFMMLAEEVPEAREHMGSYGLAMVRQSDNSFVLLATQRNLLTLNRASAEEIQDHECEILR</sequence>
<gene>
    <name evidence="1" type="primary">cdh</name>
    <name type="ordered locus">ECSE_4207</name>
</gene>